<name>SPNS1_HUMAN</name>
<proteinExistence type="evidence at protein level"/>
<evidence type="ECO:0000255" key="1"/>
<evidence type="ECO:0000256" key="2">
    <source>
        <dbReference type="SAM" id="MobiDB-lite"/>
    </source>
</evidence>
<evidence type="ECO:0000269" key="3">
    <source>
    </source>
</evidence>
<evidence type="ECO:0000269" key="4">
    <source>
    </source>
</evidence>
<evidence type="ECO:0000269" key="5">
    <source>
    </source>
</evidence>
<evidence type="ECO:0000269" key="6">
    <source>
    </source>
</evidence>
<evidence type="ECO:0000269" key="7">
    <source>
    </source>
</evidence>
<evidence type="ECO:0000303" key="8">
    <source>
    </source>
</evidence>
<evidence type="ECO:0000303" key="9">
    <source>
    </source>
</evidence>
<evidence type="ECO:0000303" key="10">
    <source>
    </source>
</evidence>
<evidence type="ECO:0000303" key="11">
    <source>
    </source>
</evidence>
<evidence type="ECO:0000303" key="12">
    <source>
    </source>
</evidence>
<evidence type="ECO:0000303" key="13">
    <source>
    </source>
</evidence>
<evidence type="ECO:0000303" key="14">
    <source>
    </source>
</evidence>
<evidence type="ECO:0000305" key="15"/>
<evidence type="ECO:0000305" key="16">
    <source>
    </source>
</evidence>
<evidence type="ECO:0007744" key="17">
    <source>
    </source>
</evidence>
<evidence type="ECO:0007744" key="18">
    <source>
    </source>
</evidence>
<evidence type="ECO:0007744" key="19">
    <source>
    </source>
</evidence>
<organism>
    <name type="scientific">Homo sapiens</name>
    <name type="common">Human</name>
    <dbReference type="NCBI Taxonomy" id="9606"/>
    <lineage>
        <taxon>Eukaryota</taxon>
        <taxon>Metazoa</taxon>
        <taxon>Chordata</taxon>
        <taxon>Craniata</taxon>
        <taxon>Vertebrata</taxon>
        <taxon>Euteleostomi</taxon>
        <taxon>Mammalia</taxon>
        <taxon>Eutheria</taxon>
        <taxon>Euarchontoglires</taxon>
        <taxon>Primates</taxon>
        <taxon>Haplorrhini</taxon>
        <taxon>Catarrhini</taxon>
        <taxon>Hominidae</taxon>
        <taxon>Homo</taxon>
    </lineage>
</organism>
<keyword id="KW-0002">3D-structure</keyword>
<keyword id="KW-0007">Acetylation</keyword>
<keyword id="KW-0025">Alternative splicing</keyword>
<keyword id="KW-0445">Lipid transport</keyword>
<keyword id="KW-0458">Lysosome</keyword>
<keyword id="KW-0472">Membrane</keyword>
<keyword id="KW-0496">Mitochondrion</keyword>
<keyword id="KW-0999">Mitochondrion inner membrane</keyword>
<keyword id="KW-0597">Phosphoprotein</keyword>
<keyword id="KW-1267">Proteomics identification</keyword>
<keyword id="KW-1185">Reference proteome</keyword>
<keyword id="KW-0812">Transmembrane</keyword>
<keyword id="KW-1133">Transmembrane helix</keyword>
<keyword id="KW-0813">Transport</keyword>
<dbReference type="EMBL" id="AF212371">
    <property type="protein sequence ID" value="AAG43830.1"/>
    <property type="molecule type" value="mRNA"/>
</dbReference>
<dbReference type="EMBL" id="AK095677">
    <property type="protein sequence ID" value="BAC04603.1"/>
    <property type="molecule type" value="mRNA"/>
</dbReference>
<dbReference type="EMBL" id="AK289787">
    <property type="protein sequence ID" value="BAF82476.1"/>
    <property type="molecule type" value="mRNA"/>
</dbReference>
<dbReference type="EMBL" id="AF370423">
    <property type="protein sequence ID" value="AAQ15259.1"/>
    <property type="status" value="ALT_SEQ"/>
    <property type="molecule type" value="mRNA"/>
</dbReference>
<dbReference type="EMBL" id="AL390215">
    <property type="protein sequence ID" value="CAB99229.1"/>
    <property type="molecule type" value="mRNA"/>
</dbReference>
<dbReference type="EMBL" id="AC109460">
    <property type="status" value="NOT_ANNOTATED_CDS"/>
    <property type="molecule type" value="Genomic_DNA"/>
</dbReference>
<dbReference type="EMBL" id="CH471267">
    <property type="protein sequence ID" value="EAW52018.1"/>
    <property type="molecule type" value="Genomic_DNA"/>
</dbReference>
<dbReference type="EMBL" id="CH471267">
    <property type="protein sequence ID" value="EAW52019.1"/>
    <property type="molecule type" value="Genomic_DNA"/>
</dbReference>
<dbReference type="EMBL" id="BC006156">
    <property type="protein sequence ID" value="AAH06156.1"/>
    <property type="molecule type" value="mRNA"/>
</dbReference>
<dbReference type="EMBL" id="BC008325">
    <property type="protein sequence ID" value="AAH08325.1"/>
    <property type="molecule type" value="mRNA"/>
</dbReference>
<dbReference type="EMBL" id="BC038961">
    <property type="protein sequence ID" value="AAH38961.1"/>
    <property type="molecule type" value="mRNA"/>
</dbReference>
<dbReference type="EMBL" id="BC047741">
    <property type="protein sequence ID" value="AAH47741.1"/>
    <property type="molecule type" value="mRNA"/>
</dbReference>
<dbReference type="EMBL" id="BC065235">
    <property type="protein sequence ID" value="AAH65235.1"/>
    <property type="molecule type" value="mRNA"/>
</dbReference>
<dbReference type="CCDS" id="CCDS10646.1">
    <molecule id="Q9H2V7-1"/>
</dbReference>
<dbReference type="CCDS" id="CCDS45452.1">
    <molecule id="Q9H2V7-2"/>
</dbReference>
<dbReference type="CCDS" id="CCDS45453.1">
    <molecule id="Q9H2V7-3"/>
</dbReference>
<dbReference type="CCDS" id="CCDS45454.1">
    <molecule id="Q9H2V7-4"/>
</dbReference>
<dbReference type="RefSeq" id="NP_001135920.1">
    <molecule id="Q9H2V7-1"/>
    <property type="nucleotide sequence ID" value="NM_001142448.2"/>
</dbReference>
<dbReference type="RefSeq" id="NP_001135921.1">
    <molecule id="Q9H2V7-3"/>
    <property type="nucleotide sequence ID" value="NM_001142449.2"/>
</dbReference>
<dbReference type="RefSeq" id="NP_001135922.1">
    <molecule id="Q9H2V7-4"/>
    <property type="nucleotide sequence ID" value="NM_001142450.2"/>
</dbReference>
<dbReference type="RefSeq" id="NP_001135923.1">
    <molecule id="Q9H2V7-2"/>
    <property type="nucleotide sequence ID" value="NM_001142451.2"/>
</dbReference>
<dbReference type="RefSeq" id="NP_114427.1">
    <molecule id="Q9H2V7-1"/>
    <property type="nucleotide sequence ID" value="NM_032038.3"/>
</dbReference>
<dbReference type="PDB" id="9BOI">
    <property type="method" value="EM"/>
    <property type="resolution" value="3.22 A"/>
    <property type="chains" value="A=56-528"/>
</dbReference>
<dbReference type="PDBsum" id="9BOI"/>
<dbReference type="EMDB" id="EMD-44741"/>
<dbReference type="EMDB" id="EMD-44742"/>
<dbReference type="SMR" id="Q9H2V7"/>
<dbReference type="BioGRID" id="123836">
    <property type="interactions" value="118"/>
</dbReference>
<dbReference type="FunCoup" id="Q9H2V7">
    <property type="interactions" value="1135"/>
</dbReference>
<dbReference type="IntAct" id="Q9H2V7">
    <property type="interactions" value="67"/>
</dbReference>
<dbReference type="MINT" id="Q9H2V7"/>
<dbReference type="STRING" id="9606.ENSP00000309945"/>
<dbReference type="BindingDB" id="Q9H2V7"/>
<dbReference type="TCDB" id="2.A.1.49.2">
    <property type="family name" value="the major facilitator superfamily (mfs)"/>
</dbReference>
<dbReference type="GlyGen" id="Q9H2V7">
    <property type="glycosylation" value="3 sites, 1 O-linked glycan (1 site)"/>
</dbReference>
<dbReference type="iPTMnet" id="Q9H2V7"/>
<dbReference type="PhosphoSitePlus" id="Q9H2V7"/>
<dbReference type="SwissPalm" id="Q9H2V7"/>
<dbReference type="BioMuta" id="SPNS1"/>
<dbReference type="DMDM" id="74733566"/>
<dbReference type="jPOST" id="Q9H2V7"/>
<dbReference type="MassIVE" id="Q9H2V7"/>
<dbReference type="PaxDb" id="9606-ENSP00000309945"/>
<dbReference type="PeptideAtlas" id="Q9H2V7"/>
<dbReference type="ProteomicsDB" id="80600">
    <molecule id="Q9H2V7-1"/>
</dbReference>
<dbReference type="ProteomicsDB" id="80601">
    <molecule id="Q9H2V7-2"/>
</dbReference>
<dbReference type="ProteomicsDB" id="80602">
    <molecule id="Q9H2V7-3"/>
</dbReference>
<dbReference type="ProteomicsDB" id="80604">
    <molecule id="Q9H2V7-5"/>
</dbReference>
<dbReference type="Pumba" id="Q9H2V7"/>
<dbReference type="Antibodypedia" id="26665">
    <property type="antibodies" value="78 antibodies from 19 providers"/>
</dbReference>
<dbReference type="DNASU" id="83985"/>
<dbReference type="Ensembl" id="ENST00000311008.16">
    <molecule id="Q9H2V7-1"/>
    <property type="protein sequence ID" value="ENSP00000309945.11"/>
    <property type="gene ID" value="ENSG00000169682.18"/>
</dbReference>
<dbReference type="Ensembl" id="ENST00000323081.12">
    <molecule id="Q9H2V7-4"/>
    <property type="protein sequence ID" value="ENSP00000318228.8"/>
    <property type="gene ID" value="ENSG00000169682.18"/>
</dbReference>
<dbReference type="Ensembl" id="ENST00000334536.12">
    <molecule id="Q9H2V7-2"/>
    <property type="protein sequence ID" value="ENSP00000335494.8"/>
    <property type="gene ID" value="ENSG00000169682.18"/>
</dbReference>
<dbReference type="Ensembl" id="ENST00000352260.11">
    <molecule id="Q9H2V7-3"/>
    <property type="protein sequence ID" value="ENSP00000306050.10"/>
    <property type="gene ID" value="ENSG00000169682.18"/>
</dbReference>
<dbReference type="GeneID" id="83985"/>
<dbReference type="KEGG" id="hsa:83985"/>
<dbReference type="MANE-Select" id="ENST00000311008.16">
    <property type="protein sequence ID" value="ENSP00000309945.11"/>
    <property type="RefSeq nucleotide sequence ID" value="NM_032038.3"/>
    <property type="RefSeq protein sequence ID" value="NP_114427.1"/>
</dbReference>
<dbReference type="UCSC" id="uc002drx.3">
    <molecule id="Q9H2V7-1"/>
    <property type="organism name" value="human"/>
</dbReference>
<dbReference type="AGR" id="HGNC:30621"/>
<dbReference type="CTD" id="83985"/>
<dbReference type="DisGeNET" id="83985"/>
<dbReference type="GeneCards" id="SPNS1"/>
<dbReference type="HGNC" id="HGNC:30621">
    <property type="gene designation" value="SPNS1"/>
</dbReference>
<dbReference type="HPA" id="ENSG00000169682">
    <property type="expression patterns" value="Low tissue specificity"/>
</dbReference>
<dbReference type="MIM" id="612583">
    <property type="type" value="gene"/>
</dbReference>
<dbReference type="neXtProt" id="NX_Q9H2V7"/>
<dbReference type="OpenTargets" id="ENSG00000169682"/>
<dbReference type="PharmGKB" id="PA162404561"/>
<dbReference type="VEuPathDB" id="HostDB:ENSG00000169682"/>
<dbReference type="eggNOG" id="KOG1330">
    <property type="taxonomic scope" value="Eukaryota"/>
</dbReference>
<dbReference type="GeneTree" id="ENSGT00390000005976"/>
<dbReference type="HOGENOM" id="CLU_001265_5_12_1"/>
<dbReference type="InParanoid" id="Q9H2V7"/>
<dbReference type="OMA" id="YICAAGL"/>
<dbReference type="OrthoDB" id="6770063at2759"/>
<dbReference type="PAN-GO" id="Q9H2V7">
    <property type="GO annotations" value="2 GO annotations based on evolutionary models"/>
</dbReference>
<dbReference type="PhylomeDB" id="Q9H2V7"/>
<dbReference type="TreeFam" id="TF314395"/>
<dbReference type="PathwayCommons" id="Q9H2V7"/>
<dbReference type="SignaLink" id="Q9H2V7"/>
<dbReference type="BioGRID-ORCS" id="83985">
    <property type="hits" value="85 hits in 1177 CRISPR screens"/>
</dbReference>
<dbReference type="ChiTaRS" id="SPNS1">
    <property type="organism name" value="human"/>
</dbReference>
<dbReference type="GenomeRNAi" id="83985"/>
<dbReference type="Pharos" id="Q9H2V7">
    <property type="development level" value="Tbio"/>
</dbReference>
<dbReference type="PRO" id="PR:Q9H2V7"/>
<dbReference type="Proteomes" id="UP000005640">
    <property type="component" value="Chromosome 16"/>
</dbReference>
<dbReference type="RNAct" id="Q9H2V7">
    <property type="molecule type" value="protein"/>
</dbReference>
<dbReference type="Bgee" id="ENSG00000169682">
    <property type="expression patterns" value="Expressed in granulocyte and 98 other cell types or tissues"/>
</dbReference>
<dbReference type="ExpressionAtlas" id="Q9H2V7">
    <property type="expression patterns" value="baseline and differential"/>
</dbReference>
<dbReference type="GO" id="GO:0005765">
    <property type="term" value="C:lysosomal membrane"/>
    <property type="evidence" value="ECO:0007005"/>
    <property type="project" value="UniProtKB"/>
</dbReference>
<dbReference type="GO" id="GO:0016020">
    <property type="term" value="C:membrane"/>
    <property type="evidence" value="ECO:0000318"/>
    <property type="project" value="GO_Central"/>
</dbReference>
<dbReference type="GO" id="GO:0005743">
    <property type="term" value="C:mitochondrial inner membrane"/>
    <property type="evidence" value="ECO:0007669"/>
    <property type="project" value="UniProtKB-SubCell"/>
</dbReference>
<dbReference type="GO" id="GO:0022857">
    <property type="term" value="F:transmembrane transporter activity"/>
    <property type="evidence" value="ECO:0000318"/>
    <property type="project" value="GO_Central"/>
</dbReference>
<dbReference type="GO" id="GO:0051977">
    <property type="term" value="P:lysophospholipid transport"/>
    <property type="evidence" value="ECO:0000318"/>
    <property type="project" value="GO_Central"/>
</dbReference>
<dbReference type="GO" id="GO:0033700">
    <property type="term" value="P:phospholipid efflux"/>
    <property type="evidence" value="ECO:0000318"/>
    <property type="project" value="GO_Central"/>
</dbReference>
<dbReference type="GO" id="GO:0035751">
    <property type="term" value="P:regulation of lysosomal lumen pH"/>
    <property type="evidence" value="ECO:0007669"/>
    <property type="project" value="Ensembl"/>
</dbReference>
<dbReference type="CDD" id="cd17328">
    <property type="entry name" value="MFS_spinster_like"/>
    <property type="match status" value="1"/>
</dbReference>
<dbReference type="FunFam" id="1.20.1250.20:FF:000097">
    <property type="entry name" value="protein spinster homolog 1"/>
    <property type="match status" value="1"/>
</dbReference>
<dbReference type="Gene3D" id="1.20.1250.20">
    <property type="entry name" value="MFS general substrate transporter like domains"/>
    <property type="match status" value="1"/>
</dbReference>
<dbReference type="InterPro" id="IPR011701">
    <property type="entry name" value="MFS"/>
</dbReference>
<dbReference type="InterPro" id="IPR020846">
    <property type="entry name" value="MFS_dom"/>
</dbReference>
<dbReference type="InterPro" id="IPR044770">
    <property type="entry name" value="MFS_spinster-like"/>
</dbReference>
<dbReference type="InterPro" id="IPR036259">
    <property type="entry name" value="MFS_trans_sf"/>
</dbReference>
<dbReference type="PANTHER" id="PTHR23505:SF13">
    <property type="entry name" value="PROTEIN SPINSTER HOMOLOG 1"/>
    <property type="match status" value="1"/>
</dbReference>
<dbReference type="PANTHER" id="PTHR23505">
    <property type="entry name" value="SPINSTER"/>
    <property type="match status" value="1"/>
</dbReference>
<dbReference type="Pfam" id="PF07690">
    <property type="entry name" value="MFS_1"/>
    <property type="match status" value="1"/>
</dbReference>
<dbReference type="SUPFAM" id="SSF103473">
    <property type="entry name" value="MFS general substrate transporter"/>
    <property type="match status" value="1"/>
</dbReference>
<dbReference type="PROSITE" id="PS50850">
    <property type="entry name" value="MFS"/>
    <property type="match status" value="1"/>
</dbReference>
<accession>Q9H2V7</accession>
<accession>B5MDM9</accession>
<accession>Q6P182</accession>
<accession>Q71RB5</accession>
<accession>Q7L541</accession>
<accession>Q86VU7</accession>
<accession>Q8N953</accession>
<accession>Q8TCS5</accession>
<accession>Q9BRN5</accession>
<protein>
    <recommendedName>
        <fullName>Protein spinster homolog 1</fullName>
    </recommendedName>
    <alternativeName>
        <fullName evidence="8">HSpin1</fullName>
    </alternativeName>
    <alternativeName>
        <fullName evidence="13 14">SPNS1</fullName>
    </alternativeName>
    <alternativeName>
        <fullName>Spinster-like protein 1</fullName>
    </alternativeName>
</protein>
<reference key="1">
    <citation type="journal article" date="2001" name="Mol. Cell. Biol.">
        <title>Mutations in the novel membrane protein spinster interfere with programmed cell death and cause neural degeneration in Drosophila melanogaster.</title>
        <authorList>
            <person name="Nakano Y."/>
            <person name="Fujitani K."/>
            <person name="Kurihara J."/>
            <person name="Ragan J."/>
            <person name="Usui-Aoki K."/>
            <person name="Shimoda L."/>
            <person name="Lukacsovich T."/>
            <person name="Suzuki K."/>
            <person name="Sezaki M."/>
            <person name="Sano Y."/>
            <person name="Ueda R."/>
            <person name="Awano W."/>
            <person name="Kaneda M."/>
            <person name="Umeda M."/>
            <person name="Yamamoto D."/>
        </authorList>
    </citation>
    <scope>NUCLEOTIDE SEQUENCE [MRNA] (ISOFORM 1)</scope>
</reference>
<reference key="2">
    <citation type="journal article" date="2004" name="Nat. Genet.">
        <title>Complete sequencing and characterization of 21,243 full-length human cDNAs.</title>
        <authorList>
            <person name="Ota T."/>
            <person name="Suzuki Y."/>
            <person name="Nishikawa T."/>
            <person name="Otsuki T."/>
            <person name="Sugiyama T."/>
            <person name="Irie R."/>
            <person name="Wakamatsu A."/>
            <person name="Hayashi K."/>
            <person name="Sato H."/>
            <person name="Nagai K."/>
            <person name="Kimura K."/>
            <person name="Makita H."/>
            <person name="Sekine M."/>
            <person name="Obayashi M."/>
            <person name="Nishi T."/>
            <person name="Shibahara T."/>
            <person name="Tanaka T."/>
            <person name="Ishii S."/>
            <person name="Yamamoto J."/>
            <person name="Saito K."/>
            <person name="Kawai Y."/>
            <person name="Isono Y."/>
            <person name="Nakamura Y."/>
            <person name="Nagahari K."/>
            <person name="Murakami K."/>
            <person name="Yasuda T."/>
            <person name="Iwayanagi T."/>
            <person name="Wagatsuma M."/>
            <person name="Shiratori A."/>
            <person name="Sudo H."/>
            <person name="Hosoiri T."/>
            <person name="Kaku Y."/>
            <person name="Kodaira H."/>
            <person name="Kondo H."/>
            <person name="Sugawara M."/>
            <person name="Takahashi M."/>
            <person name="Kanda K."/>
            <person name="Yokoi T."/>
            <person name="Furuya T."/>
            <person name="Kikkawa E."/>
            <person name="Omura Y."/>
            <person name="Abe K."/>
            <person name="Kamihara K."/>
            <person name="Katsuta N."/>
            <person name="Sato K."/>
            <person name="Tanikawa M."/>
            <person name="Yamazaki M."/>
            <person name="Ninomiya K."/>
            <person name="Ishibashi T."/>
            <person name="Yamashita H."/>
            <person name="Murakawa K."/>
            <person name="Fujimori K."/>
            <person name="Tanai H."/>
            <person name="Kimata M."/>
            <person name="Watanabe M."/>
            <person name="Hiraoka S."/>
            <person name="Chiba Y."/>
            <person name="Ishida S."/>
            <person name="Ono Y."/>
            <person name="Takiguchi S."/>
            <person name="Watanabe S."/>
            <person name="Yosida M."/>
            <person name="Hotuta T."/>
            <person name="Kusano J."/>
            <person name="Kanehori K."/>
            <person name="Takahashi-Fujii A."/>
            <person name="Hara H."/>
            <person name="Tanase T.-O."/>
            <person name="Nomura Y."/>
            <person name="Togiya S."/>
            <person name="Komai F."/>
            <person name="Hara R."/>
            <person name="Takeuchi K."/>
            <person name="Arita M."/>
            <person name="Imose N."/>
            <person name="Musashino K."/>
            <person name="Yuuki H."/>
            <person name="Oshima A."/>
            <person name="Sasaki N."/>
            <person name="Aotsuka S."/>
            <person name="Yoshikawa Y."/>
            <person name="Matsunawa H."/>
            <person name="Ichihara T."/>
            <person name="Shiohata N."/>
            <person name="Sano S."/>
            <person name="Moriya S."/>
            <person name="Momiyama H."/>
            <person name="Satoh N."/>
            <person name="Takami S."/>
            <person name="Terashima Y."/>
            <person name="Suzuki O."/>
            <person name="Nakagawa S."/>
            <person name="Senoh A."/>
            <person name="Mizoguchi H."/>
            <person name="Goto Y."/>
            <person name="Shimizu F."/>
            <person name="Wakebe H."/>
            <person name="Hishigaki H."/>
            <person name="Watanabe T."/>
            <person name="Sugiyama A."/>
            <person name="Takemoto M."/>
            <person name="Kawakami B."/>
            <person name="Yamazaki M."/>
            <person name="Watanabe K."/>
            <person name="Kumagai A."/>
            <person name="Itakura S."/>
            <person name="Fukuzumi Y."/>
            <person name="Fujimori Y."/>
            <person name="Komiyama M."/>
            <person name="Tashiro H."/>
            <person name="Tanigami A."/>
            <person name="Fujiwara T."/>
            <person name="Ono T."/>
            <person name="Yamada K."/>
            <person name="Fujii Y."/>
            <person name="Ozaki K."/>
            <person name="Hirao M."/>
            <person name="Ohmori Y."/>
            <person name="Kawabata A."/>
            <person name="Hikiji T."/>
            <person name="Kobatake N."/>
            <person name="Inagaki H."/>
            <person name="Ikema Y."/>
            <person name="Okamoto S."/>
            <person name="Okitani R."/>
            <person name="Kawakami T."/>
            <person name="Noguchi S."/>
            <person name="Itoh T."/>
            <person name="Shigeta K."/>
            <person name="Senba T."/>
            <person name="Matsumura K."/>
            <person name="Nakajima Y."/>
            <person name="Mizuno T."/>
            <person name="Morinaga M."/>
            <person name="Sasaki M."/>
            <person name="Togashi T."/>
            <person name="Oyama M."/>
            <person name="Hata H."/>
            <person name="Watanabe M."/>
            <person name="Komatsu T."/>
            <person name="Mizushima-Sugano J."/>
            <person name="Satoh T."/>
            <person name="Shirai Y."/>
            <person name="Takahashi Y."/>
            <person name="Nakagawa K."/>
            <person name="Okumura K."/>
            <person name="Nagase T."/>
            <person name="Nomura N."/>
            <person name="Kikuchi H."/>
            <person name="Masuho Y."/>
            <person name="Yamashita R."/>
            <person name="Nakai K."/>
            <person name="Yada T."/>
            <person name="Nakamura Y."/>
            <person name="Ohara O."/>
            <person name="Isogai T."/>
            <person name="Sugano S."/>
        </authorList>
    </citation>
    <scope>NUCLEOTIDE SEQUENCE [LARGE SCALE MRNA] (ISOFORM 5)</scope>
    <source>
        <tissue>Brain</tissue>
    </source>
</reference>
<reference key="3">
    <citation type="journal article" date="2004" name="Proc. Natl. Acad. Sci. U.S.A.">
        <title>Large-scale cDNA transfection screening for genes related to cancer development and progression.</title>
        <authorList>
            <person name="Wan D."/>
            <person name="Gong Y."/>
            <person name="Qin W."/>
            <person name="Zhang P."/>
            <person name="Li J."/>
            <person name="Wei L."/>
            <person name="Zhou X."/>
            <person name="Li H."/>
            <person name="Qiu X."/>
            <person name="Zhong F."/>
            <person name="He L."/>
            <person name="Yu J."/>
            <person name="Yao G."/>
            <person name="Jiang H."/>
            <person name="Qian L."/>
            <person name="Yu Y."/>
            <person name="Shu H."/>
            <person name="Chen X."/>
            <person name="Xu H."/>
            <person name="Guo M."/>
            <person name="Pan Z."/>
            <person name="Chen Y."/>
            <person name="Ge C."/>
            <person name="Yang S."/>
            <person name="Gu J."/>
        </authorList>
    </citation>
    <scope>NUCLEOTIDE SEQUENCE [LARGE SCALE MRNA] (ISOFORM 4)</scope>
</reference>
<reference key="4">
    <citation type="journal article" date="2007" name="BMC Genomics">
        <title>The full-ORF clone resource of the German cDNA consortium.</title>
        <authorList>
            <person name="Bechtel S."/>
            <person name="Rosenfelder H."/>
            <person name="Duda A."/>
            <person name="Schmidt C.P."/>
            <person name="Ernst U."/>
            <person name="Wellenreuther R."/>
            <person name="Mehrle A."/>
            <person name="Schuster C."/>
            <person name="Bahr A."/>
            <person name="Bloecker H."/>
            <person name="Heubner D."/>
            <person name="Hoerlein A."/>
            <person name="Michel G."/>
            <person name="Wedler H."/>
            <person name="Koehrer K."/>
            <person name="Ottenwaelder B."/>
            <person name="Poustka A."/>
            <person name="Wiemann S."/>
            <person name="Schupp I."/>
        </authorList>
    </citation>
    <scope>NUCLEOTIDE SEQUENCE [LARGE SCALE MRNA] (ISOFORM 3)</scope>
    <source>
        <tissue>Mammary cancer</tissue>
    </source>
</reference>
<reference key="5">
    <citation type="journal article" date="2004" name="Nature">
        <title>The sequence and analysis of duplication-rich human chromosome 16.</title>
        <authorList>
            <person name="Martin J."/>
            <person name="Han C."/>
            <person name="Gordon L.A."/>
            <person name="Terry A."/>
            <person name="Prabhakar S."/>
            <person name="She X."/>
            <person name="Xie G."/>
            <person name="Hellsten U."/>
            <person name="Chan Y.M."/>
            <person name="Altherr M."/>
            <person name="Couronne O."/>
            <person name="Aerts A."/>
            <person name="Bajorek E."/>
            <person name="Black S."/>
            <person name="Blumer H."/>
            <person name="Branscomb E."/>
            <person name="Brown N.C."/>
            <person name="Bruno W.J."/>
            <person name="Buckingham J.M."/>
            <person name="Callen D.F."/>
            <person name="Campbell C.S."/>
            <person name="Campbell M.L."/>
            <person name="Campbell E.W."/>
            <person name="Caoile C."/>
            <person name="Challacombe J.F."/>
            <person name="Chasteen L.A."/>
            <person name="Chertkov O."/>
            <person name="Chi H.C."/>
            <person name="Christensen M."/>
            <person name="Clark L.M."/>
            <person name="Cohn J.D."/>
            <person name="Denys M."/>
            <person name="Detter J.C."/>
            <person name="Dickson M."/>
            <person name="Dimitrijevic-Bussod M."/>
            <person name="Escobar J."/>
            <person name="Fawcett J.J."/>
            <person name="Flowers D."/>
            <person name="Fotopulos D."/>
            <person name="Glavina T."/>
            <person name="Gomez M."/>
            <person name="Gonzales E."/>
            <person name="Goodstein D."/>
            <person name="Goodwin L.A."/>
            <person name="Grady D.L."/>
            <person name="Grigoriev I."/>
            <person name="Groza M."/>
            <person name="Hammon N."/>
            <person name="Hawkins T."/>
            <person name="Haydu L."/>
            <person name="Hildebrand C.E."/>
            <person name="Huang W."/>
            <person name="Israni S."/>
            <person name="Jett J."/>
            <person name="Jewett P.B."/>
            <person name="Kadner K."/>
            <person name="Kimball H."/>
            <person name="Kobayashi A."/>
            <person name="Krawczyk M.-C."/>
            <person name="Leyba T."/>
            <person name="Longmire J.L."/>
            <person name="Lopez F."/>
            <person name="Lou Y."/>
            <person name="Lowry S."/>
            <person name="Ludeman T."/>
            <person name="Manohar C.F."/>
            <person name="Mark G.A."/>
            <person name="McMurray K.L."/>
            <person name="Meincke L.J."/>
            <person name="Morgan J."/>
            <person name="Moyzis R.K."/>
            <person name="Mundt M.O."/>
            <person name="Munk A.C."/>
            <person name="Nandkeshwar R.D."/>
            <person name="Pitluck S."/>
            <person name="Pollard M."/>
            <person name="Predki P."/>
            <person name="Parson-Quintana B."/>
            <person name="Ramirez L."/>
            <person name="Rash S."/>
            <person name="Retterer J."/>
            <person name="Ricke D.O."/>
            <person name="Robinson D.L."/>
            <person name="Rodriguez A."/>
            <person name="Salamov A."/>
            <person name="Saunders E.H."/>
            <person name="Scott D."/>
            <person name="Shough T."/>
            <person name="Stallings R.L."/>
            <person name="Stalvey M."/>
            <person name="Sutherland R.D."/>
            <person name="Tapia R."/>
            <person name="Tesmer J.G."/>
            <person name="Thayer N."/>
            <person name="Thompson L.S."/>
            <person name="Tice H."/>
            <person name="Torney D.C."/>
            <person name="Tran-Gyamfi M."/>
            <person name="Tsai M."/>
            <person name="Ulanovsky L.E."/>
            <person name="Ustaszewska A."/>
            <person name="Vo N."/>
            <person name="White P.S."/>
            <person name="Williams A.L."/>
            <person name="Wills P.L."/>
            <person name="Wu J.-R."/>
            <person name="Wu K."/>
            <person name="Yang J."/>
            <person name="DeJong P."/>
            <person name="Bruce D."/>
            <person name="Doggett N.A."/>
            <person name="Deaven L."/>
            <person name="Schmutz J."/>
            <person name="Grimwood J."/>
            <person name="Richardson P."/>
            <person name="Rokhsar D.S."/>
            <person name="Eichler E.E."/>
            <person name="Gilna P."/>
            <person name="Lucas S.M."/>
            <person name="Myers R.M."/>
            <person name="Rubin E.M."/>
            <person name="Pennacchio L.A."/>
        </authorList>
    </citation>
    <scope>NUCLEOTIDE SEQUENCE [LARGE SCALE GENOMIC DNA]</scope>
</reference>
<reference key="6">
    <citation type="submission" date="2005-07" db="EMBL/GenBank/DDBJ databases">
        <authorList>
            <person name="Mural R.J."/>
            <person name="Istrail S."/>
            <person name="Sutton G.G."/>
            <person name="Florea L."/>
            <person name="Halpern A.L."/>
            <person name="Mobarry C.M."/>
            <person name="Lippert R."/>
            <person name="Walenz B."/>
            <person name="Shatkay H."/>
            <person name="Dew I."/>
            <person name="Miller J.R."/>
            <person name="Flanigan M.J."/>
            <person name="Edwards N.J."/>
            <person name="Bolanos R."/>
            <person name="Fasulo D."/>
            <person name="Halldorsson B.V."/>
            <person name="Hannenhalli S."/>
            <person name="Turner R."/>
            <person name="Yooseph S."/>
            <person name="Lu F."/>
            <person name="Nusskern D.R."/>
            <person name="Shue B.C."/>
            <person name="Zheng X.H."/>
            <person name="Zhong F."/>
            <person name="Delcher A.L."/>
            <person name="Huson D.H."/>
            <person name="Kravitz S.A."/>
            <person name="Mouchard L."/>
            <person name="Reinert K."/>
            <person name="Remington K.A."/>
            <person name="Clark A.G."/>
            <person name="Waterman M.S."/>
            <person name="Eichler E.E."/>
            <person name="Adams M.D."/>
            <person name="Hunkapiller M.W."/>
            <person name="Myers E.W."/>
            <person name="Venter J.C."/>
        </authorList>
    </citation>
    <scope>NUCLEOTIDE SEQUENCE [LARGE SCALE GENOMIC DNA]</scope>
</reference>
<reference key="7">
    <citation type="journal article" date="2004" name="Genome Res.">
        <title>The status, quality, and expansion of the NIH full-length cDNA project: the Mammalian Gene Collection (MGC).</title>
        <authorList>
            <consortium name="The MGC Project Team"/>
        </authorList>
    </citation>
    <scope>NUCLEOTIDE SEQUENCE [LARGE SCALE MRNA] (ISOFORMS 1 AND 2)</scope>
    <scope>VARIANT PRO-230</scope>
    <source>
        <tissue>Blood</tissue>
        <tissue>Brain</tissue>
        <tissue>Pancreas</tissue>
        <tissue>Skin</tissue>
    </source>
</reference>
<reference key="8">
    <citation type="journal article" date="2002" name="Neuron">
        <title>Unrestricted synaptic growth in spinster-a late endosomal protein implicated in TGF-beta-mediated synaptic growth regulation.</title>
        <authorList>
            <person name="Sweeney S.T."/>
            <person name="Davis G.W."/>
        </authorList>
    </citation>
    <scope>SUBCELLULAR LOCATION</scope>
</reference>
<reference key="9">
    <citation type="journal article" date="2003" name="Cell Death Differ.">
        <title>HSpin1, a transmembrane protein interacting with Bcl-2/Bcl-xL, induces a caspase-independent autophagic cell death.</title>
        <authorList>
            <person name="Yanagisawa H."/>
            <person name="Miyashita T."/>
            <person name="Nakano Y."/>
            <person name="Yamamoto D."/>
        </authorList>
    </citation>
    <scope>FUNCTION</scope>
    <scope>SUBCELLULAR LOCATION</scope>
    <scope>INTERACTION WITH BCL2 AND BCL2L1</scope>
</reference>
<reference key="10">
    <citation type="journal article" date="2022" name="Proc. Natl. Acad. Sci. U.S.A.">
        <title>Spns1 is a lysophospholipid transporter mediating lysosomal phospholipid salvage.</title>
        <authorList>
            <person name="He M."/>
            <person name="Kuk A.C.Y."/>
            <person name="Ding M."/>
            <person name="Chin C.F."/>
            <person name="Galam D.L.A."/>
            <person name="Nah J.M."/>
            <person name="Tan B.C."/>
            <person name="Yeo H.L."/>
            <person name="Chua G.L."/>
            <person name="Benke P.I."/>
            <person name="Wenk M.R."/>
            <person name="Ho L."/>
            <person name="Torta F."/>
            <person name="Silver D.L."/>
        </authorList>
    </citation>
    <scope>FUNCTION</scope>
    <scope>TRANSPORTER ACTIVITY</scope>
    <scope>BIOPHYSICOCHEMICAL PROPERTIES</scope>
</reference>
<reference key="11">
    <citation type="journal article" date="2023" name="Sci. Adv.">
        <title>An SPNS1-dependent lysosomal lipid transport pathway that enables cell survival under choline limitation.</title>
        <authorList>
            <person name="Scharenberg S.G."/>
            <person name="Dong W."/>
            <person name="Ghoochani A."/>
            <person name="Nyame K."/>
            <person name="Levin-Konigsberg R."/>
            <person name="Krishnan A.R."/>
            <person name="Rawat E.S."/>
            <person name="Spees K."/>
            <person name="Bassik M.C."/>
            <person name="Abu-Remaileh M."/>
        </authorList>
    </citation>
    <scope>FUNCTION</scope>
    <scope>TRANSPORTER ACTIVITY</scope>
    <scope>BIOPHYSICOCHEMICAL PROPERTIES</scope>
</reference>
<reference key="12">
    <citation type="journal article" date="2008" name="Proc. Natl. Acad. Sci. U.S.A.">
        <title>A quantitative atlas of mitotic phosphorylation.</title>
        <authorList>
            <person name="Dephoure N."/>
            <person name="Zhou C."/>
            <person name="Villen J."/>
            <person name="Beausoleil S.A."/>
            <person name="Bakalarski C.E."/>
            <person name="Elledge S.J."/>
            <person name="Gygi S.P."/>
        </authorList>
    </citation>
    <scope>PHOSPHORYLATION [LARGE SCALE ANALYSIS] AT SER-518</scope>
    <scope>IDENTIFICATION BY MASS SPECTROMETRY [LARGE SCALE ANALYSIS]</scope>
    <source>
        <tissue>Cervix carcinoma</tissue>
    </source>
</reference>
<reference key="13">
    <citation type="journal article" date="2009" name="Anal. Chem.">
        <title>Lys-N and trypsin cover complementary parts of the phosphoproteome in a refined SCX-based approach.</title>
        <authorList>
            <person name="Gauci S."/>
            <person name="Helbig A.O."/>
            <person name="Slijper M."/>
            <person name="Krijgsveld J."/>
            <person name="Heck A.J."/>
            <person name="Mohammed S."/>
        </authorList>
    </citation>
    <scope>ACETYLATION [LARGE SCALE ANALYSIS] AT ALA-2</scope>
    <scope>CLEAVAGE OF INITIATOR METHIONINE [LARGE SCALE ANALYSIS]</scope>
    <scope>IDENTIFICATION BY MASS SPECTROMETRY [LARGE SCALE ANALYSIS]</scope>
</reference>
<reference key="14">
    <citation type="journal article" date="2011" name="Sci. Signal.">
        <title>System-wide temporal characterization of the proteome and phosphoproteome of human embryonic stem cell differentiation.</title>
        <authorList>
            <person name="Rigbolt K.T."/>
            <person name="Prokhorova T.A."/>
            <person name="Akimov V."/>
            <person name="Henningsen J."/>
            <person name="Johansen P.T."/>
            <person name="Kratchmarova I."/>
            <person name="Kassem M."/>
            <person name="Mann M."/>
            <person name="Olsen J.V."/>
            <person name="Blagoev B."/>
        </authorList>
    </citation>
    <scope>IDENTIFICATION BY MASS SPECTROMETRY [LARGE SCALE ANALYSIS]</scope>
</reference>
<reference key="15">
    <citation type="journal article" date="2013" name="J. Proteome Res.">
        <title>Toward a comprehensive characterization of a human cancer cell phosphoproteome.</title>
        <authorList>
            <person name="Zhou H."/>
            <person name="Di Palma S."/>
            <person name="Preisinger C."/>
            <person name="Peng M."/>
            <person name="Polat A.N."/>
            <person name="Heck A.J."/>
            <person name="Mohammed S."/>
        </authorList>
    </citation>
    <scope>PHOSPHORYLATION [LARGE SCALE ANALYSIS] AT SER-518</scope>
    <scope>IDENTIFICATION BY MASS SPECTROMETRY [LARGE SCALE ANALYSIS]</scope>
    <source>
        <tissue>Cervix carcinoma</tissue>
        <tissue>Erythroleukemia</tissue>
    </source>
</reference>
<reference key="16">
    <citation type="journal article" date="2015" name="Proteomics">
        <title>N-terminome analysis of the human mitochondrial proteome.</title>
        <authorList>
            <person name="Vaca Jacome A.S."/>
            <person name="Rabilloud T."/>
            <person name="Schaeffer-Reiss C."/>
            <person name="Rompais M."/>
            <person name="Ayoub D."/>
            <person name="Lane L."/>
            <person name="Bairoch A."/>
            <person name="Van Dorsselaer A."/>
            <person name="Carapito C."/>
        </authorList>
    </citation>
    <scope>IDENTIFICATION BY MASS SPECTROMETRY [LARGE SCALE ANALYSIS]</scope>
</reference>
<comment type="function">
    <text evidence="4 6 7 14">Plays a critical role in the phospholipid salvage pathway from lysosomes to the cytosol (PubMed:36161949, PubMed:37075117). Mediates the rate-limiting, proton-dependent, lysosomal efflux of lysophospholipids, which can then be reacylated by acyltransferases in the endoplasmic reticulum to form phospholipids (PubMed:36161949, PubMed:37075117). Selective for zwitterionic headgroups such as lysophosphatidylcholine (LPC) and lysophosphatidylethanolamine (LPE), can also transport lysophosphatidylglycerol (LPG), but not other anionic lysophospholipids, sphingosine, nor sphingomyelin (PubMed:36161949). Transports lysophospholipids with saturated, monounsaturated, and polyunsaturated fatty acids, such as 1-hexadecanoyl-sn-glycero-3-phosphocholine, 1-(9Z-octadecenoyl)-sn-glycero-3-phosphocholine and 1-(4Z,7Z,10Z,13Z,16Z,19Z-docosahexaenoyl)-sn-glycero-3-phosphocholine, respectively (PubMed:36161949, PubMed:37075117). Can also transport lysoplasmalogen (LPC with a fatty alcohol) such as 1-(1Z-hexadecenyl)-sn-glycero-3-phosphocholine (PubMed:36161949). Lysosomal LPC could function as intracellular signaling messenger (PubMed:37075117). Essential player in lysosomal homeostasis (PubMed:36161949). Crucial for cell survival under conditions of nutrient limitation (PubMed:37075117). May be involved in necrotic or autophagic cell death (PubMed:12815463).</text>
</comment>
<comment type="catalytic activity">
    <reaction evidence="6 7">
        <text>a 1-acyl-sn-glycero-3-phosphocholine(out) + H(+)(out) = a 1-acyl-sn-glycero-3-phosphocholine(in) + H(+)(in)</text>
        <dbReference type="Rhea" id="RHEA:74435"/>
        <dbReference type="ChEBI" id="CHEBI:15378"/>
        <dbReference type="ChEBI" id="CHEBI:58168"/>
    </reaction>
</comment>
<comment type="catalytic activity">
    <reaction evidence="6 16">
        <text>1-hexadecanoyl-sn-glycero-3-phosphocholine(out) + H(+)(out) = 1-hexadecanoyl-sn-glycero-3-phosphocholine(in) + H(+)(in)</text>
        <dbReference type="Rhea" id="RHEA:74427"/>
        <dbReference type="ChEBI" id="CHEBI:15378"/>
        <dbReference type="ChEBI" id="CHEBI:72998"/>
    </reaction>
</comment>
<comment type="catalytic activity">
    <reaction evidence="6 7">
        <text>1-(9Z-octadecenoyl)-sn-glycero-3-phosphocholine(out) + H(+)(out) = 1-(9Z-octadecenoyl)-sn-glycero-3-phosphocholine(in) + H(+)(in)</text>
        <dbReference type="Rhea" id="RHEA:74411"/>
        <dbReference type="ChEBI" id="CHEBI:15378"/>
        <dbReference type="ChEBI" id="CHEBI:28610"/>
    </reaction>
</comment>
<comment type="catalytic activity">
    <reaction evidence="6 16">
        <text>1-(5Z,8Z,11Z,14Z-eicosatetraenoyl)-sn-glycero-3-phosphocholine(out) + H(+)(out) = 1-(5Z,8Z,11Z,14Z-eicosatetraenoyl)-sn-glycero-3-phosphocholine(in) + H(+)(in)</text>
        <dbReference type="Rhea" id="RHEA:74451"/>
        <dbReference type="ChEBI" id="CHEBI:15378"/>
        <dbReference type="ChEBI" id="CHEBI:74344"/>
    </reaction>
</comment>
<comment type="catalytic activity">
    <reaction evidence="6 16">
        <text>1-(4Z,7Z,10Z,13Z,16Z,19Z-docosahexaenoyl)-sn-glycero-3-phosphocholine(out) + H(+)(out) = 1-(4Z,7Z,10Z,13Z,16Z,19Z-docosahexaenoyl)-sn-glycero-3-phosphocholine(in) + H(+)(in)</text>
        <dbReference type="Rhea" id="RHEA:74423"/>
        <dbReference type="ChEBI" id="CHEBI:15378"/>
        <dbReference type="ChEBI" id="CHEBI:73873"/>
    </reaction>
</comment>
<comment type="catalytic activity">
    <reaction evidence="6 16">
        <text>a 1-acyl-sn-glycero-3-phosphoethanolamine(out) + H(+)(out) = a 1-acyl-sn-glycero-3-phosphoethanolamine(in) + H(+)(in)</text>
        <dbReference type="Rhea" id="RHEA:74439"/>
        <dbReference type="ChEBI" id="CHEBI:15378"/>
        <dbReference type="ChEBI" id="CHEBI:64381"/>
    </reaction>
</comment>
<comment type="catalytic activity">
    <reaction evidence="6">
        <text>1-(9Z-octadecenoyl)-sn-glycero-3-phosphoethanolamine(out) + H(+)(out) = 1-(9Z-octadecenoyl)-sn-glycero-3-phosphoethanolamine(in) + H(+)(in)</text>
        <dbReference type="Rhea" id="RHEA:74415"/>
        <dbReference type="ChEBI" id="CHEBI:15378"/>
        <dbReference type="ChEBI" id="CHEBI:74971"/>
    </reaction>
</comment>
<comment type="catalytic activity">
    <reaction evidence="6">
        <text>1-acyl-sn-glycero-3-phospho-(1'-sn-glycerol)(out) + H(+)(out) = 1-acyl-sn-glycero-3-phospho-(1'-sn-glycerol)(in) + H(+)(in)</text>
        <dbReference type="Rhea" id="RHEA:74443"/>
        <dbReference type="ChEBI" id="CHEBI:15378"/>
        <dbReference type="ChEBI" id="CHEBI:64840"/>
    </reaction>
</comment>
<comment type="catalytic activity">
    <reaction evidence="6">
        <text>1-(9Z-octadecenoyl)-sn-glycero-3-phospho-(1'-sn-glycerol)(out) + H(+)(out) = 1-(9Z-octadecenoyl)-sn-glycero-3-phospho-(1'-sn-glycerol)(in) + H(+)(in)</text>
        <dbReference type="Rhea" id="RHEA:74419"/>
        <dbReference type="ChEBI" id="CHEBI:15378"/>
        <dbReference type="ChEBI" id="CHEBI:72828"/>
    </reaction>
</comment>
<comment type="catalytic activity">
    <reaction evidence="6">
        <text>a 1-O-(1Z-alkenyl)-sn-glycero-3-phosphocholine(out) + H(+)(out) = a 1-O-(1Z-alkenyl)-sn-glycero-3-phosphocholine(in) + H(+)(in)</text>
        <dbReference type="Rhea" id="RHEA:74447"/>
        <dbReference type="ChEBI" id="CHEBI:15378"/>
        <dbReference type="ChEBI" id="CHEBI:77287"/>
    </reaction>
</comment>
<comment type="catalytic activity">
    <reaction evidence="6">
        <text>1-(1Z-hexadecenyl)-sn-glycero-3-phosphocholine(out) + H(+)(out) = 1-(1Z-hexadecenyl)-sn-glycero-3-phosphocholine(in) + H(+)(in)</text>
        <dbReference type="Rhea" id="RHEA:74431"/>
        <dbReference type="ChEBI" id="CHEBI:15378"/>
        <dbReference type="ChEBI" id="CHEBI:73850"/>
    </reaction>
</comment>
<comment type="catalytic activity">
    <reaction evidence="6">
        <text>a 1-O-(1Z-alkenyl)-sn-glycero-3-phosphoethanolamine(out) + H(+)(out) = a 1-O-(1Z-alkenyl)-sn-glycero-3-phosphoethanolamine(in) + H(+)(in)</text>
        <dbReference type="Rhea" id="RHEA:74455"/>
        <dbReference type="ChEBI" id="CHEBI:15378"/>
        <dbReference type="ChEBI" id="CHEBI:77288"/>
    </reaction>
</comment>
<comment type="catalytic activity">
    <reaction evidence="6">
        <text>1-O-(1Z-hexadecenyl)-sn-glycero-3-phosphoethanolamine(out) + H(+)(out) = 1-O-(1Z-hexadecenyl)-sn-glycero-3-phosphoethanolamine(in) + H(+)(in)</text>
        <dbReference type="Rhea" id="RHEA:74459"/>
        <dbReference type="ChEBI" id="CHEBI:15378"/>
        <dbReference type="ChEBI" id="CHEBI:133139"/>
    </reaction>
</comment>
<comment type="biophysicochemical properties">
    <phDependence>
        <text evidence="6 7">Optimum pH is 5.0-6.0.</text>
    </phDependence>
</comment>
<comment type="subunit">
    <text evidence="4">Interacts with BCL2 and BCL2L1.</text>
</comment>
<comment type="interaction">
    <interactant intactId="EBI-1386527">
        <id>Q9H2V7</id>
    </interactant>
    <interactant intactId="EBI-78035">
        <id>Q07817</id>
        <label>BCL2L1</label>
    </interactant>
    <organismsDiffer>false</organismsDiffer>
    <experiments>3</experiments>
</comment>
<comment type="subcellular location">
    <subcellularLocation>
        <location evidence="3">Lysosome membrane</location>
        <topology evidence="3">Multi-pass membrane protein</topology>
    </subcellularLocation>
    <subcellularLocation>
        <location evidence="4">Mitochondrion inner membrane</location>
        <topology evidence="4">Multi-pass membrane protein</topology>
    </subcellularLocation>
    <text evidence="4">Ocassionally localizes to mitochondria.</text>
</comment>
<comment type="alternative products">
    <event type="alternative splicing"/>
    <isoform>
        <id>Q9H2V7-1</id>
        <name>1</name>
        <sequence type="displayed"/>
    </isoform>
    <isoform>
        <id>Q9H2V7-2</id>
        <name>2</name>
        <sequence type="described" ref="VSP_028196"/>
    </isoform>
    <isoform>
        <id>Q9H2V7-3</id>
        <name>3</name>
        <name>CRA_d</name>
        <sequence type="described" ref="VSP_028195 VSP_028196"/>
    </isoform>
    <isoform>
        <id>Q9H2V7-4</id>
        <name>4</name>
        <sequence type="described" ref="VSP_028194"/>
    </isoform>
    <isoform>
        <id>Q9H2V7-5</id>
        <name>5</name>
        <sequence type="described" ref="VSP_036389"/>
    </isoform>
</comment>
<comment type="similarity">
    <text evidence="15">Belongs to the major facilitator superfamily. Spinster (TC 2.A.1.49) family.</text>
</comment>
<comment type="sequence caution" evidence="15">
    <conflict type="erroneous initiation">
        <sequence resource="EMBL-CDS" id="AAQ15259"/>
    </conflict>
    <text>Truncated N-terminus.</text>
</comment>
<comment type="sequence caution" evidence="15">
    <conflict type="frameshift">
        <sequence resource="EMBL-CDS" id="AAQ15259"/>
    </conflict>
</comment>
<sequence length="528" mass="56630">MAGSDTAPFLSQADDPDDGPVPGTPGLPGSTGNPKSEEPEVPDQEGLQRITGLSPGRSALIVAVLCYINLLNYMDRFTVAGVLPDIEQFFNIGDSSSGLIQTVFISSYMVLAPVFGYLGDRYNRKYLMCGGIAFWSLVTLGSSFIPGEHFWLLLLTRGLVGVGEASYSTIAPTLIADLFVADQRSRMLSIFYFAIPVGSGLGYIAGSKVKDMAGDWHWALRVTPGLGVVAVLLLFLVVREPPRGAVERHSDLPPLNPTSWWADLRALARNPSFVLSSLGFTAVAFVTGSLALWAPAFLLRSRVVLGETPPCLPGDSCSSSDSLIFGLITCLTGVLGVGLGVEISRRLRHSNPRADPLVCATGLLGSAPFLFLSLACARGSIVATYIFIFIGETLLSMNWAIVADILLYVVIPTRRSTAEAFQIVLSHLLGDAGSPYLIGLISDRLRRNWPPSFLSEFRALQFSLMLCAFVGALGGAAFLGTAIFIEADRRRAQLHVQGLLHEAGSTDDRIVVPQRGRSTRVPVASVLI</sequence>
<feature type="initiator methionine" description="Removed" evidence="18">
    <location>
        <position position="1"/>
    </location>
</feature>
<feature type="chain" id="PRO_0000305039" description="Protein spinster homolog 1">
    <location>
        <begin position="2"/>
        <end position="528"/>
    </location>
</feature>
<feature type="transmembrane region" description="Helical" evidence="1">
    <location>
        <begin position="50"/>
        <end position="70"/>
    </location>
</feature>
<feature type="transmembrane region" description="Helical" evidence="1">
    <location>
        <begin position="98"/>
        <end position="118"/>
    </location>
</feature>
<feature type="transmembrane region" description="Helical" evidence="1">
    <location>
        <begin position="127"/>
        <end position="147"/>
    </location>
</feature>
<feature type="transmembrane region" description="Helical" evidence="1">
    <location>
        <begin position="160"/>
        <end position="180"/>
    </location>
</feature>
<feature type="transmembrane region" description="Helical" evidence="1">
    <location>
        <begin position="187"/>
        <end position="207"/>
    </location>
</feature>
<feature type="transmembrane region" description="Helical" evidence="1">
    <location>
        <begin position="218"/>
        <end position="238"/>
    </location>
</feature>
<feature type="transmembrane region" description="Helical" evidence="1">
    <location>
        <begin position="278"/>
        <end position="298"/>
    </location>
</feature>
<feature type="transmembrane region" description="Helical" evidence="1">
    <location>
        <begin position="323"/>
        <end position="343"/>
    </location>
</feature>
<feature type="transmembrane region" description="Helical" evidence="1">
    <location>
        <begin position="357"/>
        <end position="377"/>
    </location>
</feature>
<feature type="transmembrane region" description="Helical" evidence="1">
    <location>
        <begin position="381"/>
        <end position="401"/>
    </location>
</feature>
<feature type="transmembrane region" description="Helical" evidence="1">
    <location>
        <begin position="421"/>
        <end position="441"/>
    </location>
</feature>
<feature type="transmembrane region" description="Helical" evidence="1">
    <location>
        <begin position="465"/>
        <end position="485"/>
    </location>
</feature>
<feature type="region of interest" description="Disordered" evidence="2">
    <location>
        <begin position="1"/>
        <end position="49"/>
    </location>
</feature>
<feature type="modified residue" description="N-acetylalanine" evidence="18">
    <location>
        <position position="2"/>
    </location>
</feature>
<feature type="modified residue" description="Phosphoserine" evidence="17 19">
    <location>
        <position position="518"/>
    </location>
</feature>
<feature type="splice variant" id="VSP_028194" description="In isoform 4." evidence="11">
    <location>
        <begin position="1"/>
        <end position="73"/>
    </location>
</feature>
<feature type="splice variant" id="VSP_028195" description="In isoform 3." evidence="12">
    <location>
        <begin position="81"/>
        <end position="102"/>
    </location>
</feature>
<feature type="splice variant" id="VSP_036389" description="In isoform 5." evidence="9">
    <original>TPGLGVVAVLLLFLVVREPPRGAVERHSDLPPLNPTSWWADLRALARNPSFVLSSLGFTAVAFVTGSLALWAPAFLLRSRVVLGETPPCLPGDSCSSSDSLIFGLITCLTGVLGVGLGVEISRRLRHSNPRADPLVCATGLLGSAPFLFLSLACARGSIVATYIFIFIGETLLSMNWAIVADILLYVVIPTRRSTAEAFQIVLSHLLGDAGSPYLIGLISDRLRRNWPPSFLSEFRALQFSLMLCAFVGALGGAAFLGTAIFIEADRRRAQLHVQGLLHEAGSTDDRIVVPQRGRSTRVPVASVLI</original>
    <variation>SLVLAWG</variation>
    <location>
        <begin position="223"/>
        <end position="528"/>
    </location>
</feature>
<feature type="splice variant" id="VSP_028196" description="In isoform 2 and isoform 3." evidence="10 12">
    <location>
        <begin position="271"/>
        <end position="322"/>
    </location>
</feature>
<feature type="sequence variant" id="VAR_035157" description="In dbSNP:rs17855956." evidence="5">
    <original>A</original>
    <variation>P</variation>
    <location>
        <position position="230"/>
    </location>
</feature>
<gene>
    <name type="primary">SPNS1</name>
    <name type="synonym">SPIN1</name>
    <name type="ORF">PP20300</name>
</gene>